<keyword id="KW-0067">ATP-binding</keyword>
<keyword id="KW-0131">Cell cycle</keyword>
<keyword id="KW-0132">Cell division</keyword>
<keyword id="KW-0963">Cytoplasm</keyword>
<keyword id="KW-0418">Kinase</keyword>
<keyword id="KW-0460">Magnesium</keyword>
<keyword id="KW-0479">Metal-binding</keyword>
<keyword id="KW-0498">Mitosis</keyword>
<keyword id="KW-0547">Nucleotide-binding</keyword>
<keyword id="KW-0597">Phosphoprotein</keyword>
<keyword id="KW-0723">Serine/threonine-protein kinase</keyword>
<keyword id="KW-0808">Transferase</keyword>
<gene>
    <name evidence="4" type="primary">CRK2</name>
    <name evidence="8" type="synonym">CRK</name>
</gene>
<comment type="function">
    <text evidence="1 3">Serine/threonine-protein kinase (By similarity). Involved in the control of the cell cycle. Required for entry into S-phase and mitosis (By similarity). Probable component of the kinase complex that phosphorylates the repetitive C-terminus of RNA polymerase II (By similarity).</text>
</comment>
<comment type="catalytic activity">
    <reaction evidence="3">
        <text>L-seryl-[protein] + ATP = O-phospho-L-seryl-[protein] + ADP + H(+)</text>
        <dbReference type="Rhea" id="RHEA:17989"/>
        <dbReference type="Rhea" id="RHEA-COMP:9863"/>
        <dbReference type="Rhea" id="RHEA-COMP:11604"/>
        <dbReference type="ChEBI" id="CHEBI:15378"/>
        <dbReference type="ChEBI" id="CHEBI:29999"/>
        <dbReference type="ChEBI" id="CHEBI:30616"/>
        <dbReference type="ChEBI" id="CHEBI:83421"/>
        <dbReference type="ChEBI" id="CHEBI:456216"/>
        <dbReference type="EC" id="2.7.11.22"/>
    </reaction>
</comment>
<comment type="catalytic activity">
    <reaction evidence="3">
        <text>L-threonyl-[protein] + ATP = O-phospho-L-threonyl-[protein] + ADP + H(+)</text>
        <dbReference type="Rhea" id="RHEA:46608"/>
        <dbReference type="Rhea" id="RHEA-COMP:11060"/>
        <dbReference type="Rhea" id="RHEA-COMP:11605"/>
        <dbReference type="ChEBI" id="CHEBI:15378"/>
        <dbReference type="ChEBI" id="CHEBI:30013"/>
        <dbReference type="ChEBI" id="CHEBI:30616"/>
        <dbReference type="ChEBI" id="CHEBI:61977"/>
        <dbReference type="ChEBI" id="CHEBI:456216"/>
        <dbReference type="EC" id="2.7.11.22"/>
    </reaction>
</comment>
<comment type="catalytic activity">
    <reaction evidence="3">
        <text>[DNA-directed RNA polymerase] + ATP = phospho-[DNA-directed RNA polymerase] + ADP + H(+)</text>
        <dbReference type="Rhea" id="RHEA:10216"/>
        <dbReference type="Rhea" id="RHEA-COMP:11321"/>
        <dbReference type="Rhea" id="RHEA-COMP:11322"/>
        <dbReference type="ChEBI" id="CHEBI:15378"/>
        <dbReference type="ChEBI" id="CHEBI:30616"/>
        <dbReference type="ChEBI" id="CHEBI:43176"/>
        <dbReference type="ChEBI" id="CHEBI:68546"/>
        <dbReference type="ChEBI" id="CHEBI:456216"/>
        <dbReference type="EC" id="2.7.11.23"/>
    </reaction>
</comment>
<comment type="cofactor">
    <cofactor evidence="3">
        <name>Mg(2+)</name>
        <dbReference type="ChEBI" id="CHEBI:18420"/>
    </cofactor>
</comment>
<comment type="activity regulation">
    <text evidence="2">Phosphorylation at Thr-17 or Tyr-18 inactivates the enzyme, while phosphorylation at Ser-230 activates it.</text>
</comment>
<comment type="subunit">
    <text evidence="3">May form a complex composed of at least the catalytic subunit CRK2 and a cyclin.</text>
</comment>
<comment type="subcellular location">
    <subcellularLocation>
        <location evidence="1">Cytoplasm</location>
    </subcellularLocation>
</comment>
<comment type="similarity">
    <text evidence="9">Belongs to the protein kinase superfamily. CMGC Ser/Thr protein kinase family. CDC2/CDKX subfamily.</text>
</comment>
<name>CDK2H_CRIFA</name>
<accession>Q01917</accession>
<organism>
    <name type="scientific">Crithidia fasciculata</name>
    <dbReference type="NCBI Taxonomy" id="5656"/>
    <lineage>
        <taxon>Eukaryota</taxon>
        <taxon>Discoba</taxon>
        <taxon>Euglenozoa</taxon>
        <taxon>Kinetoplastea</taxon>
        <taxon>Metakinetoplastina</taxon>
        <taxon>Trypanosomatida</taxon>
        <taxon>Trypanosomatidae</taxon>
        <taxon>Leishmaniinae</taxon>
        <taxon>Crithidia</taxon>
    </lineage>
</organism>
<proteinExistence type="inferred from homology"/>
<reference key="1">
    <citation type="journal article" date="1992" name="Nucleic Acids Res.">
        <title>The Crithidia fasciculata CRK gene encodes a novel cdc2-related protein containing large inserts between highly conserved domains.</title>
        <authorList>
            <person name="Brown L.M."/>
            <person name="Hines J.C."/>
            <person name="Ray D.S."/>
        </authorList>
    </citation>
    <scope>NUCLEOTIDE SEQUENCE [GENOMIC DNA]</scope>
</reference>
<protein>
    <recommendedName>
        <fullName evidence="9">Cyclin-dependent kinase 2 homolog</fullName>
        <ecNumber evidence="3">2.7.11.22</ecNumber>
        <ecNumber evidence="3">2.7.11.23</ecNumber>
    </recommendedName>
    <alternativeName>
        <fullName evidence="3">Cell division control protein 2 homolog</fullName>
    </alternativeName>
    <alternativeName>
        <fullName evidence="4">cdc2-related kinase 2</fullName>
    </alternativeName>
</protein>
<dbReference type="EC" id="2.7.11.22" evidence="3"/>
<dbReference type="EC" id="2.7.11.23" evidence="3"/>
<dbReference type="EMBL" id="Z12149">
    <property type="protein sequence ID" value="CAA78133.1"/>
    <property type="molecule type" value="Genomic_DNA"/>
</dbReference>
<dbReference type="PIR" id="S26381">
    <property type="entry name" value="S26381"/>
</dbReference>
<dbReference type="SMR" id="Q01917"/>
<dbReference type="VEuPathDB" id="TriTrypDB:CFAC1_120018200"/>
<dbReference type="BRENDA" id="2.7.11.22">
    <property type="organism ID" value="1365"/>
</dbReference>
<dbReference type="GO" id="GO:0005737">
    <property type="term" value="C:cytoplasm"/>
    <property type="evidence" value="ECO:0007669"/>
    <property type="project" value="UniProtKB-SubCell"/>
</dbReference>
<dbReference type="GO" id="GO:0005634">
    <property type="term" value="C:nucleus"/>
    <property type="evidence" value="ECO:0007669"/>
    <property type="project" value="TreeGrafter"/>
</dbReference>
<dbReference type="GO" id="GO:0005524">
    <property type="term" value="F:ATP binding"/>
    <property type="evidence" value="ECO:0007669"/>
    <property type="project" value="UniProtKB-KW"/>
</dbReference>
<dbReference type="GO" id="GO:0004693">
    <property type="term" value="F:cyclin-dependent protein serine/threonine kinase activity"/>
    <property type="evidence" value="ECO:0007669"/>
    <property type="project" value="UniProtKB-EC"/>
</dbReference>
<dbReference type="GO" id="GO:0046872">
    <property type="term" value="F:metal ion binding"/>
    <property type="evidence" value="ECO:0007669"/>
    <property type="project" value="UniProtKB-KW"/>
</dbReference>
<dbReference type="GO" id="GO:0106310">
    <property type="term" value="F:protein serine kinase activity"/>
    <property type="evidence" value="ECO:0007669"/>
    <property type="project" value="RHEA"/>
</dbReference>
<dbReference type="GO" id="GO:0008353">
    <property type="term" value="F:RNA polymerase II CTD heptapeptide repeat kinase activity"/>
    <property type="evidence" value="ECO:0007669"/>
    <property type="project" value="UniProtKB-EC"/>
</dbReference>
<dbReference type="GO" id="GO:0051301">
    <property type="term" value="P:cell division"/>
    <property type="evidence" value="ECO:0007669"/>
    <property type="project" value="UniProtKB-KW"/>
</dbReference>
<dbReference type="FunFam" id="3.30.200.20:FF:000737">
    <property type="entry name" value="Protein kinase putative (CRK)"/>
    <property type="match status" value="1"/>
</dbReference>
<dbReference type="Gene3D" id="3.30.200.20">
    <property type="entry name" value="Phosphorylase Kinase, domain 1"/>
    <property type="match status" value="1"/>
</dbReference>
<dbReference type="Gene3D" id="1.10.510.10">
    <property type="entry name" value="Transferase(Phosphotransferase) domain 1"/>
    <property type="match status" value="1"/>
</dbReference>
<dbReference type="InterPro" id="IPR050108">
    <property type="entry name" value="CDK"/>
</dbReference>
<dbReference type="InterPro" id="IPR011009">
    <property type="entry name" value="Kinase-like_dom_sf"/>
</dbReference>
<dbReference type="InterPro" id="IPR000719">
    <property type="entry name" value="Prot_kinase_dom"/>
</dbReference>
<dbReference type="InterPro" id="IPR017441">
    <property type="entry name" value="Protein_kinase_ATP_BS"/>
</dbReference>
<dbReference type="InterPro" id="IPR008271">
    <property type="entry name" value="Ser/Thr_kinase_AS"/>
</dbReference>
<dbReference type="PANTHER" id="PTHR24056:SF552">
    <property type="entry name" value="CELL DIVISION CONTROL PROTEIN 2 HOMOLOG 4"/>
    <property type="match status" value="1"/>
</dbReference>
<dbReference type="PANTHER" id="PTHR24056">
    <property type="entry name" value="CELL DIVISION PROTEIN KINASE"/>
    <property type="match status" value="1"/>
</dbReference>
<dbReference type="Pfam" id="PF00069">
    <property type="entry name" value="Pkinase"/>
    <property type="match status" value="2"/>
</dbReference>
<dbReference type="SMART" id="SM00220">
    <property type="entry name" value="S_TKc"/>
    <property type="match status" value="1"/>
</dbReference>
<dbReference type="SUPFAM" id="SSF56112">
    <property type="entry name" value="Protein kinase-like (PK-like)"/>
    <property type="match status" value="1"/>
</dbReference>
<dbReference type="PROSITE" id="PS00107">
    <property type="entry name" value="PROTEIN_KINASE_ATP"/>
    <property type="match status" value="1"/>
</dbReference>
<dbReference type="PROSITE" id="PS50011">
    <property type="entry name" value="PROTEIN_KINASE_DOM"/>
    <property type="match status" value="1"/>
</dbReference>
<dbReference type="PROSITE" id="PS00108">
    <property type="entry name" value="PROTEIN_KINASE_ST"/>
    <property type="match status" value="1"/>
</dbReference>
<feature type="chain" id="PRO_0000085737" description="Cyclin-dependent kinase 2 homolog">
    <location>
        <begin position="1"/>
        <end position="474"/>
    </location>
</feature>
<feature type="domain" description="Protein kinase" evidence="5">
    <location>
        <begin position="7"/>
        <end position="446"/>
    </location>
</feature>
<feature type="region of interest" description="Disordered" evidence="7">
    <location>
        <begin position="150"/>
        <end position="200"/>
    </location>
</feature>
<feature type="region of interest" description="Disordered" evidence="7">
    <location>
        <begin position="334"/>
        <end position="356"/>
    </location>
</feature>
<feature type="compositionally biased region" description="Low complexity" evidence="7">
    <location>
        <begin position="334"/>
        <end position="354"/>
    </location>
</feature>
<feature type="active site" description="Proton acceptor" evidence="5 6">
    <location>
        <position position="131"/>
    </location>
</feature>
<feature type="binding site" evidence="5">
    <location>
        <begin position="13"/>
        <end position="21"/>
    </location>
    <ligand>
        <name>ATP</name>
        <dbReference type="ChEBI" id="CHEBI:30616"/>
    </ligand>
</feature>
<feature type="binding site" evidence="5">
    <location>
        <position position="36"/>
    </location>
    <ligand>
        <name>ATP</name>
        <dbReference type="ChEBI" id="CHEBI:30616"/>
    </ligand>
</feature>
<feature type="modified residue" description="Phosphothreonine" evidence="2">
    <location>
        <position position="17"/>
    </location>
</feature>
<feature type="modified residue" description="Phosphotyrosine" evidence="2">
    <location>
        <position position="18"/>
    </location>
</feature>
<feature type="modified residue" description="Phosphoserine" evidence="2">
    <location>
        <position position="230"/>
    </location>
</feature>
<sequence>MSTLGRYRHVVKLGEGTYGMVYKGTEIQTGRVVAFKRMVVTSDDEGIPGAAIREICLLKELRHNNVVELFEVLFDPPKITMIFELCDCDLKRYMESRPQRLLDANTEMRPILKQIFLGLEYLHGRCVVHRDMKPQNIFVNVRGPDFAAMTALPSSPQQSMRVPHAGGTNGEAGRASANGNEHAPRPTAAEGSVSPWEEAANTKDAPNQLIIKIGDFGLARVEEIPVKKYSHEVVTLWYRSPDVLMSSALYSYPVDIWSMGAIFFEMATSKVLFSGRNEDEQLLRMFWLLGSPTKETWPSMMTYTGTMERLERSSRAAAERQDLTVNGDVYVQQQQLQAQQQQPQQGSSPSHSSSRAPDLLTQLAHKRFYHSESAMQQRRESASSAANSYRLPVELWFDRPLFKEYMAATRCDVSVSPEGIDLLRRCLMYEPNQRITAAEAVHHPYLERVPVPTAGSLDVLISSLMQTMETIHLL</sequence>
<evidence type="ECO:0000250" key="1">
    <source>
        <dbReference type="UniProtKB" id="P04551"/>
    </source>
</evidence>
<evidence type="ECO:0000250" key="2">
    <source>
        <dbReference type="UniProtKB" id="P24941"/>
    </source>
</evidence>
<evidence type="ECO:0000250" key="3">
    <source>
        <dbReference type="UniProtKB" id="P61075"/>
    </source>
</evidence>
<evidence type="ECO:0000250" key="4">
    <source>
        <dbReference type="UniProtKB" id="Q4Z6R1"/>
    </source>
</evidence>
<evidence type="ECO:0000255" key="5">
    <source>
        <dbReference type="PROSITE-ProRule" id="PRU00159"/>
    </source>
</evidence>
<evidence type="ECO:0000255" key="6">
    <source>
        <dbReference type="PROSITE-ProRule" id="PRU10027"/>
    </source>
</evidence>
<evidence type="ECO:0000256" key="7">
    <source>
        <dbReference type="SAM" id="MobiDB-lite"/>
    </source>
</evidence>
<evidence type="ECO:0000303" key="8">
    <source>
    </source>
</evidence>
<evidence type="ECO:0000305" key="9"/>